<gene>
    <name evidence="1" type="primary">mraY</name>
    <name type="ordered locus">swp_2228</name>
</gene>
<dbReference type="EC" id="2.7.8.13" evidence="1"/>
<dbReference type="EMBL" id="CP000472">
    <property type="protein sequence ID" value="ACJ28977.1"/>
    <property type="molecule type" value="Genomic_DNA"/>
</dbReference>
<dbReference type="RefSeq" id="WP_020912338.1">
    <property type="nucleotide sequence ID" value="NC_011566.1"/>
</dbReference>
<dbReference type="SMR" id="B8CNK8"/>
<dbReference type="STRING" id="225849.swp_2228"/>
<dbReference type="KEGG" id="swp:swp_2228"/>
<dbReference type="eggNOG" id="COG0472">
    <property type="taxonomic scope" value="Bacteria"/>
</dbReference>
<dbReference type="HOGENOM" id="CLU_023982_0_0_6"/>
<dbReference type="OrthoDB" id="9805475at2"/>
<dbReference type="UniPathway" id="UPA00219"/>
<dbReference type="Proteomes" id="UP000000753">
    <property type="component" value="Chromosome"/>
</dbReference>
<dbReference type="GO" id="GO:0005886">
    <property type="term" value="C:plasma membrane"/>
    <property type="evidence" value="ECO:0007669"/>
    <property type="project" value="UniProtKB-SubCell"/>
</dbReference>
<dbReference type="GO" id="GO:0046872">
    <property type="term" value="F:metal ion binding"/>
    <property type="evidence" value="ECO:0007669"/>
    <property type="project" value="UniProtKB-KW"/>
</dbReference>
<dbReference type="GO" id="GO:0008963">
    <property type="term" value="F:phospho-N-acetylmuramoyl-pentapeptide-transferase activity"/>
    <property type="evidence" value="ECO:0007669"/>
    <property type="project" value="UniProtKB-UniRule"/>
</dbReference>
<dbReference type="GO" id="GO:0051992">
    <property type="term" value="F:UDP-N-acetylmuramoyl-L-alanyl-D-glutamyl-meso-2,6-diaminopimelyl-D-alanyl-D-alanine:undecaprenyl-phosphate transferase activity"/>
    <property type="evidence" value="ECO:0007669"/>
    <property type="project" value="RHEA"/>
</dbReference>
<dbReference type="GO" id="GO:0051301">
    <property type="term" value="P:cell division"/>
    <property type="evidence" value="ECO:0007669"/>
    <property type="project" value="UniProtKB-KW"/>
</dbReference>
<dbReference type="GO" id="GO:0071555">
    <property type="term" value="P:cell wall organization"/>
    <property type="evidence" value="ECO:0007669"/>
    <property type="project" value="UniProtKB-KW"/>
</dbReference>
<dbReference type="GO" id="GO:0009252">
    <property type="term" value="P:peptidoglycan biosynthetic process"/>
    <property type="evidence" value="ECO:0007669"/>
    <property type="project" value="UniProtKB-UniRule"/>
</dbReference>
<dbReference type="GO" id="GO:0008360">
    <property type="term" value="P:regulation of cell shape"/>
    <property type="evidence" value="ECO:0007669"/>
    <property type="project" value="UniProtKB-KW"/>
</dbReference>
<dbReference type="CDD" id="cd06852">
    <property type="entry name" value="GT_MraY"/>
    <property type="match status" value="1"/>
</dbReference>
<dbReference type="HAMAP" id="MF_00038">
    <property type="entry name" value="MraY"/>
    <property type="match status" value="1"/>
</dbReference>
<dbReference type="InterPro" id="IPR000715">
    <property type="entry name" value="Glycosyl_transferase_4"/>
</dbReference>
<dbReference type="InterPro" id="IPR003524">
    <property type="entry name" value="PNAcMuramoyl-5peptid_Trfase"/>
</dbReference>
<dbReference type="InterPro" id="IPR018480">
    <property type="entry name" value="PNAcMuramoyl-5peptid_Trfase_CS"/>
</dbReference>
<dbReference type="NCBIfam" id="TIGR00445">
    <property type="entry name" value="mraY"/>
    <property type="match status" value="1"/>
</dbReference>
<dbReference type="PANTHER" id="PTHR22926">
    <property type="entry name" value="PHOSPHO-N-ACETYLMURAMOYL-PENTAPEPTIDE-TRANSFERASE"/>
    <property type="match status" value="1"/>
</dbReference>
<dbReference type="PANTHER" id="PTHR22926:SF5">
    <property type="entry name" value="PHOSPHO-N-ACETYLMURAMOYL-PENTAPEPTIDE-TRANSFERASE HOMOLOG"/>
    <property type="match status" value="1"/>
</dbReference>
<dbReference type="Pfam" id="PF00953">
    <property type="entry name" value="Glycos_transf_4"/>
    <property type="match status" value="1"/>
</dbReference>
<dbReference type="Pfam" id="PF10555">
    <property type="entry name" value="MraY_sig1"/>
    <property type="match status" value="1"/>
</dbReference>
<dbReference type="PROSITE" id="PS01347">
    <property type="entry name" value="MRAY_1"/>
    <property type="match status" value="1"/>
</dbReference>
<dbReference type="PROSITE" id="PS01348">
    <property type="entry name" value="MRAY_2"/>
    <property type="match status" value="1"/>
</dbReference>
<feature type="chain" id="PRO_1000116521" description="Phospho-N-acetylmuramoyl-pentapeptide-transferase">
    <location>
        <begin position="1"/>
        <end position="360"/>
    </location>
</feature>
<feature type="transmembrane region" description="Helical" evidence="1">
    <location>
        <begin position="21"/>
        <end position="41"/>
    </location>
</feature>
<feature type="transmembrane region" description="Helical" evidence="1">
    <location>
        <begin position="74"/>
        <end position="94"/>
    </location>
</feature>
<feature type="transmembrane region" description="Helical" evidence="1">
    <location>
        <begin position="97"/>
        <end position="117"/>
    </location>
</feature>
<feature type="transmembrane region" description="Helical" evidence="1">
    <location>
        <begin position="135"/>
        <end position="155"/>
    </location>
</feature>
<feature type="transmembrane region" description="Helical" evidence="1">
    <location>
        <begin position="168"/>
        <end position="188"/>
    </location>
</feature>
<feature type="transmembrane region" description="Helical" evidence="1">
    <location>
        <begin position="199"/>
        <end position="219"/>
    </location>
</feature>
<feature type="transmembrane region" description="Helical" evidence="1">
    <location>
        <begin position="236"/>
        <end position="256"/>
    </location>
</feature>
<feature type="transmembrane region" description="Helical" evidence="1">
    <location>
        <begin position="263"/>
        <end position="283"/>
    </location>
</feature>
<feature type="transmembrane region" description="Helical" evidence="1">
    <location>
        <begin position="288"/>
        <end position="308"/>
    </location>
</feature>
<feature type="transmembrane region" description="Helical" evidence="1">
    <location>
        <begin position="338"/>
        <end position="358"/>
    </location>
</feature>
<keyword id="KW-0131">Cell cycle</keyword>
<keyword id="KW-0132">Cell division</keyword>
<keyword id="KW-0997">Cell inner membrane</keyword>
<keyword id="KW-1003">Cell membrane</keyword>
<keyword id="KW-0133">Cell shape</keyword>
<keyword id="KW-0961">Cell wall biogenesis/degradation</keyword>
<keyword id="KW-0460">Magnesium</keyword>
<keyword id="KW-0472">Membrane</keyword>
<keyword id="KW-0479">Metal-binding</keyword>
<keyword id="KW-0573">Peptidoglycan synthesis</keyword>
<keyword id="KW-0808">Transferase</keyword>
<keyword id="KW-0812">Transmembrane</keyword>
<keyword id="KW-1133">Transmembrane helix</keyword>
<evidence type="ECO:0000255" key="1">
    <source>
        <dbReference type="HAMAP-Rule" id="MF_00038"/>
    </source>
</evidence>
<proteinExistence type="inferred from homology"/>
<reference key="1">
    <citation type="journal article" date="2008" name="PLoS ONE">
        <title>Environmental adaptation: genomic analysis of the piezotolerant and psychrotolerant deep-sea iron reducing bacterium Shewanella piezotolerans WP3.</title>
        <authorList>
            <person name="Wang F."/>
            <person name="Wang J."/>
            <person name="Jian H."/>
            <person name="Zhang B."/>
            <person name="Li S."/>
            <person name="Wang F."/>
            <person name="Zeng X."/>
            <person name="Gao L."/>
            <person name="Bartlett D.H."/>
            <person name="Yu J."/>
            <person name="Hu S."/>
            <person name="Xiao X."/>
        </authorList>
    </citation>
    <scope>NUCLEOTIDE SEQUENCE [LARGE SCALE GENOMIC DNA]</scope>
    <source>
        <strain>WP3 / JCM 13877</strain>
    </source>
</reference>
<sequence length="360" mass="39750">MLVYLAEYLTQFYSGFNVFSYVTFRAILGLMTALMFSLWWGPKMIERLQLLQIGQVVRNDGPESHFSKRGTPTMGGLLILAGIFISVLLWGDLGSRYVWVVLFVLASFGTIGFIDDYRKVVRKDTKGLIARWKYLLQSIAAIVIAVYLYASADTAGETQLVVPFFKDVMPQLGAFFIVLVYFTIVGSSNAVNLTDGLDGLAIMPTVMVAAAFALIAYLSGHVQFANYLHIPYLPGAGELVIVCTAIVGAGLGFLWFNTYPAQVFMGDVGSLALGAALGAIAVLVRQEILLVIMGGVFVMETVSVILQVGSYKLRGQRIFRMAPIHHHYELKGWPEPRVIVRFWIISLFLVLLGLATLKLR</sequence>
<name>MRAY_SHEPW</name>
<comment type="function">
    <text evidence="1">Catalyzes the initial step of the lipid cycle reactions in the biosynthesis of the cell wall peptidoglycan: transfers peptidoglycan precursor phospho-MurNAc-pentapeptide from UDP-MurNAc-pentapeptide onto the lipid carrier undecaprenyl phosphate, yielding undecaprenyl-pyrophosphoryl-MurNAc-pentapeptide, known as lipid I.</text>
</comment>
<comment type="catalytic activity">
    <reaction evidence="1">
        <text>UDP-N-acetyl-alpha-D-muramoyl-L-alanyl-gamma-D-glutamyl-meso-2,6-diaminopimeloyl-D-alanyl-D-alanine + di-trans,octa-cis-undecaprenyl phosphate = di-trans,octa-cis-undecaprenyl diphospho-N-acetyl-alpha-D-muramoyl-L-alanyl-D-glutamyl-meso-2,6-diaminopimeloyl-D-alanyl-D-alanine + UMP</text>
        <dbReference type="Rhea" id="RHEA:28386"/>
        <dbReference type="ChEBI" id="CHEBI:57865"/>
        <dbReference type="ChEBI" id="CHEBI:60392"/>
        <dbReference type="ChEBI" id="CHEBI:61386"/>
        <dbReference type="ChEBI" id="CHEBI:61387"/>
        <dbReference type="EC" id="2.7.8.13"/>
    </reaction>
</comment>
<comment type="cofactor">
    <cofactor evidence="1">
        <name>Mg(2+)</name>
        <dbReference type="ChEBI" id="CHEBI:18420"/>
    </cofactor>
</comment>
<comment type="pathway">
    <text evidence="1">Cell wall biogenesis; peptidoglycan biosynthesis.</text>
</comment>
<comment type="subcellular location">
    <subcellularLocation>
        <location evidence="1">Cell inner membrane</location>
        <topology evidence="1">Multi-pass membrane protein</topology>
    </subcellularLocation>
</comment>
<comment type="similarity">
    <text evidence="1">Belongs to the glycosyltransferase 4 family. MraY subfamily.</text>
</comment>
<protein>
    <recommendedName>
        <fullName evidence="1">Phospho-N-acetylmuramoyl-pentapeptide-transferase</fullName>
        <ecNumber evidence="1">2.7.8.13</ecNumber>
    </recommendedName>
    <alternativeName>
        <fullName evidence="1">UDP-MurNAc-pentapeptide phosphotransferase</fullName>
    </alternativeName>
</protein>
<accession>B8CNK8</accession>
<organism>
    <name type="scientific">Shewanella piezotolerans (strain WP3 / JCM 13877)</name>
    <dbReference type="NCBI Taxonomy" id="225849"/>
    <lineage>
        <taxon>Bacteria</taxon>
        <taxon>Pseudomonadati</taxon>
        <taxon>Pseudomonadota</taxon>
        <taxon>Gammaproteobacteria</taxon>
        <taxon>Alteromonadales</taxon>
        <taxon>Shewanellaceae</taxon>
        <taxon>Shewanella</taxon>
    </lineage>
</organism>